<organism>
    <name type="scientific">Oryctolagus cuniculus</name>
    <name type="common">Rabbit</name>
    <dbReference type="NCBI Taxonomy" id="9986"/>
    <lineage>
        <taxon>Eukaryota</taxon>
        <taxon>Metazoa</taxon>
        <taxon>Chordata</taxon>
        <taxon>Craniata</taxon>
        <taxon>Vertebrata</taxon>
        <taxon>Euteleostomi</taxon>
        <taxon>Mammalia</taxon>
        <taxon>Eutheria</taxon>
        <taxon>Euarchontoglires</taxon>
        <taxon>Glires</taxon>
        <taxon>Lagomorpha</taxon>
        <taxon>Leporidae</taxon>
        <taxon>Oryctolagus</taxon>
    </lineage>
</organism>
<accession>A0A5F9D2E6</accession>
<proteinExistence type="evidence at protein level"/>
<comment type="function">
    <text evidence="1 3 4 5 6">Component of the small ribosomal subunit (PubMed:23873042, PubMed:25601755, PubMed:26245381, PubMed:27863242). The ribosome is a large ribonucleoprotein complex responsible for the synthesis of proteins in the cell (PubMed:23873042, PubMed:25601755, PubMed:26245381, PubMed:27863242). Required for processing of pre-rRNA and maturation of 40S ribosomal subunits (PubMed:25601755, PubMed:26245381, PubMed:27863242). Part of the small subunit (SSU) processome, first precursor of the small eukaryotic ribosomal subunit (PubMed:23873042, PubMed:25601755, PubMed:26245381, PubMed:27863242). During the assembly of the SSU processome in the nucleolus, many ribosome biogenesis factors, an RNA chaperone and ribosomal proteins associate with the nascent pre-rRNA and work in concert to generate RNA folding, modifications, rearrangements and cleavage as well as targeted degradation of pre-ribosomal RNA by the RNA exosome (By similarity).</text>
</comment>
<comment type="subunit">
    <text evidence="3 4 5 6 7 8 9 10 11 12">Component of the small ribosomal subunit. Part of the small subunit (SSU) processome, composed of more than 70 proteins and the RNA chaperone small nucleolar RNA (snoRNA) U3.</text>
</comment>
<comment type="subcellular location">
    <subcellularLocation>
        <location evidence="3 4 5 6 7 8 9 10 11 12">Cytoplasm</location>
    </subcellularLocation>
    <subcellularLocation>
        <location evidence="1">Nucleus</location>
        <location evidence="1">Nucleolus</location>
    </subcellularLocation>
</comment>
<comment type="similarity">
    <text evidence="13">Belongs to the eukaryotic ribosomal protein eS24 family.</text>
</comment>
<sequence>MNDTVTIRTRKFMTNRLLQRKQMVIDVLHPGKATVPKTEIREKLAKMYKTTPDVIFVFGFRTHFGGGKTTGFGMIYDSLDYAKKNEPKHRLARHGLYEKKKTSRKQRKERKNRMKKVRGTAKANVGAGKKPKE</sequence>
<dbReference type="EMBL" id="AAGW02037143">
    <property type="status" value="NOT_ANNOTATED_CDS"/>
    <property type="molecule type" value="Genomic_DNA"/>
</dbReference>
<dbReference type="RefSeq" id="XP_008268132.1">
    <property type="nucleotide sequence ID" value="XM_008269910.4"/>
</dbReference>
<dbReference type="PDB" id="3JAG">
    <property type="method" value="EM"/>
    <property type="resolution" value="3.65 A"/>
    <property type="chains" value="YY=3-128"/>
</dbReference>
<dbReference type="PDB" id="3JAH">
    <property type="method" value="EM"/>
    <property type="resolution" value="3.45 A"/>
    <property type="chains" value="YY=3-128"/>
</dbReference>
<dbReference type="PDB" id="3JAI">
    <property type="method" value="EM"/>
    <property type="resolution" value="3.65 A"/>
    <property type="chains" value="YY=3-128"/>
</dbReference>
<dbReference type="PDB" id="4D5L">
    <property type="method" value="EM"/>
    <property type="resolution" value="9.00 A"/>
    <property type="chains" value="Y=1-133"/>
</dbReference>
<dbReference type="PDB" id="4D61">
    <property type="method" value="EM"/>
    <property type="resolution" value="9.00 A"/>
    <property type="chains" value="Y=1-133"/>
</dbReference>
<dbReference type="PDB" id="4KZX">
    <property type="method" value="X-ray"/>
    <property type="resolution" value="7.81 A"/>
    <property type="chains" value="Y=1-133"/>
</dbReference>
<dbReference type="PDB" id="4KZY">
    <property type="method" value="X-ray"/>
    <property type="resolution" value="7.01 A"/>
    <property type="chains" value="Y=1-133"/>
</dbReference>
<dbReference type="PDB" id="4KZZ">
    <property type="method" value="X-ray"/>
    <property type="resolution" value="7.03 A"/>
    <property type="chains" value="Y=1-133"/>
</dbReference>
<dbReference type="PDB" id="5K0Y">
    <property type="method" value="EM"/>
    <property type="resolution" value="5.80 A"/>
    <property type="chains" value="s=3-133"/>
</dbReference>
<dbReference type="PDB" id="5LZZ">
    <property type="method" value="EM"/>
    <property type="resolution" value="3.47 A"/>
    <property type="chains" value="YY=1-130"/>
</dbReference>
<dbReference type="PDB" id="6D90">
    <property type="method" value="EM"/>
    <property type="resolution" value="3.20 A"/>
    <property type="chains" value="ZZ=1-131"/>
</dbReference>
<dbReference type="PDB" id="6D9J">
    <property type="method" value="EM"/>
    <property type="resolution" value="3.20 A"/>
    <property type="chains" value="ZZ=1-131"/>
</dbReference>
<dbReference type="PDB" id="6P4G">
    <property type="method" value="EM"/>
    <property type="resolution" value="3.10 A"/>
    <property type="chains" value="Z=1-131"/>
</dbReference>
<dbReference type="PDB" id="6P4H">
    <property type="method" value="EM"/>
    <property type="resolution" value="3.20 A"/>
    <property type="chains" value="Z=1-131"/>
</dbReference>
<dbReference type="PDB" id="6P5I">
    <property type="method" value="EM"/>
    <property type="resolution" value="3.10 A"/>
    <property type="chains" value="Z=1-131"/>
</dbReference>
<dbReference type="PDB" id="6P5J">
    <property type="method" value="EM"/>
    <property type="resolution" value="3.10 A"/>
    <property type="chains" value="Z=1-131"/>
</dbReference>
<dbReference type="PDB" id="6P5K">
    <property type="method" value="EM"/>
    <property type="resolution" value="3.10 A"/>
    <property type="chains" value="Z=1-131"/>
</dbReference>
<dbReference type="PDB" id="6P5N">
    <property type="method" value="EM"/>
    <property type="resolution" value="3.20 A"/>
    <property type="chains" value="Z=1-131"/>
</dbReference>
<dbReference type="PDB" id="6W2S">
    <property type="method" value="EM"/>
    <property type="resolution" value="3.00 A"/>
    <property type="chains" value="Z=1-131"/>
</dbReference>
<dbReference type="PDB" id="6W2T">
    <property type="method" value="EM"/>
    <property type="resolution" value="3.36 A"/>
    <property type="chains" value="Z=1-131"/>
</dbReference>
<dbReference type="PDB" id="6YAL">
    <property type="method" value="EM"/>
    <property type="resolution" value="3.00 A"/>
    <property type="chains" value="a=1-133"/>
</dbReference>
<dbReference type="PDB" id="6YAM">
    <property type="method" value="EM"/>
    <property type="resolution" value="3.60 A"/>
    <property type="chains" value="a=1-133"/>
</dbReference>
<dbReference type="PDB" id="6YAN">
    <property type="method" value="EM"/>
    <property type="resolution" value="3.48 A"/>
    <property type="chains" value="a=3-128"/>
</dbReference>
<dbReference type="PDB" id="7JQB">
    <property type="method" value="EM"/>
    <property type="resolution" value="2.70 A"/>
    <property type="chains" value="Z=1-130"/>
</dbReference>
<dbReference type="PDB" id="7JQC">
    <property type="method" value="EM"/>
    <property type="resolution" value="3.30 A"/>
    <property type="chains" value="Z=1-130"/>
</dbReference>
<dbReference type="PDB" id="7MDZ">
    <property type="method" value="EM"/>
    <property type="resolution" value="3.20 A"/>
    <property type="chains" value="YY=1-130"/>
</dbReference>
<dbReference type="PDB" id="7O7Y">
    <property type="method" value="EM"/>
    <property type="resolution" value="2.20 A"/>
    <property type="chains" value="Ax=1-130"/>
</dbReference>
<dbReference type="PDB" id="7O7Z">
    <property type="method" value="EM"/>
    <property type="resolution" value="2.40 A"/>
    <property type="chains" value="Ax=1-130"/>
</dbReference>
<dbReference type="PDB" id="7O80">
    <property type="method" value="EM"/>
    <property type="resolution" value="2.90 A"/>
    <property type="chains" value="Ax=1-130"/>
</dbReference>
<dbReference type="PDB" id="7O81">
    <property type="method" value="EM"/>
    <property type="resolution" value="3.10 A"/>
    <property type="chains" value="Ax=1-130"/>
</dbReference>
<dbReference type="PDB" id="7OYD">
    <property type="method" value="EM"/>
    <property type="resolution" value="2.30 A"/>
    <property type="chains" value="YY=1-133"/>
</dbReference>
<dbReference type="PDB" id="7SYG">
    <property type="method" value="EM"/>
    <property type="resolution" value="4.30 A"/>
    <property type="chains" value="Z=1-131"/>
</dbReference>
<dbReference type="PDB" id="7SYH">
    <property type="method" value="EM"/>
    <property type="resolution" value="4.60 A"/>
    <property type="chains" value="Z=1-131"/>
</dbReference>
<dbReference type="PDB" id="7SYI">
    <property type="method" value="EM"/>
    <property type="resolution" value="4.50 A"/>
    <property type="chains" value="Z=1-131"/>
</dbReference>
<dbReference type="PDB" id="7SYJ">
    <property type="method" value="EM"/>
    <property type="resolution" value="4.80 A"/>
    <property type="chains" value="Z=1-131"/>
</dbReference>
<dbReference type="PDB" id="7SYK">
    <property type="method" value="EM"/>
    <property type="resolution" value="4.20 A"/>
    <property type="chains" value="Z=1-131"/>
</dbReference>
<dbReference type="PDB" id="7SYL">
    <property type="method" value="EM"/>
    <property type="resolution" value="4.50 A"/>
    <property type="chains" value="Z=1-131"/>
</dbReference>
<dbReference type="PDB" id="7SYM">
    <property type="method" value="EM"/>
    <property type="resolution" value="4.80 A"/>
    <property type="chains" value="Z=1-131"/>
</dbReference>
<dbReference type="PDB" id="7SYN">
    <property type="method" value="EM"/>
    <property type="resolution" value="4.00 A"/>
    <property type="chains" value="Z=1-131"/>
</dbReference>
<dbReference type="PDB" id="7SYO">
    <property type="method" value="EM"/>
    <property type="resolution" value="4.60 A"/>
    <property type="chains" value="Z=1-131"/>
</dbReference>
<dbReference type="PDB" id="7SYP">
    <property type="method" value="EM"/>
    <property type="resolution" value="4.00 A"/>
    <property type="chains" value="Z=1-131"/>
</dbReference>
<dbReference type="PDB" id="7SYQ">
    <property type="method" value="EM"/>
    <property type="resolution" value="3.80 A"/>
    <property type="chains" value="Z=1-131"/>
</dbReference>
<dbReference type="PDB" id="7SYR">
    <property type="method" value="EM"/>
    <property type="resolution" value="3.60 A"/>
    <property type="chains" value="Z=1-131"/>
</dbReference>
<dbReference type="PDB" id="7SYS">
    <property type="method" value="EM"/>
    <property type="resolution" value="3.50 A"/>
    <property type="chains" value="Z=1-131"/>
</dbReference>
<dbReference type="PDB" id="7SYT">
    <property type="method" value="EM"/>
    <property type="resolution" value="4.40 A"/>
    <property type="chains" value="Z=1-131"/>
</dbReference>
<dbReference type="PDB" id="7SYU">
    <property type="method" value="EM"/>
    <property type="resolution" value="4.60 A"/>
    <property type="chains" value="Z=1-131"/>
</dbReference>
<dbReference type="PDB" id="7SYV">
    <property type="method" value="EM"/>
    <property type="resolution" value="3.90 A"/>
    <property type="chains" value="Z=1-131"/>
</dbReference>
<dbReference type="PDB" id="7SYW">
    <property type="method" value="EM"/>
    <property type="resolution" value="3.70 A"/>
    <property type="chains" value="Z=1-131"/>
</dbReference>
<dbReference type="PDB" id="7SYX">
    <property type="method" value="EM"/>
    <property type="resolution" value="3.70 A"/>
    <property type="chains" value="Z=1-131"/>
</dbReference>
<dbReference type="PDB" id="7TOQ">
    <property type="method" value="EM"/>
    <property type="resolution" value="3.10 A"/>
    <property type="chains" value="AS24=4-127"/>
</dbReference>
<dbReference type="PDB" id="7TOR">
    <property type="method" value="EM"/>
    <property type="resolution" value="2.90 A"/>
    <property type="chains" value="AS24=4-127"/>
</dbReference>
<dbReference type="PDB" id="7UCJ">
    <property type="method" value="EM"/>
    <property type="resolution" value="3.10 A"/>
    <property type="chains" value="YY=4-127"/>
</dbReference>
<dbReference type="PDB" id="7UCK">
    <property type="method" value="EM"/>
    <property type="resolution" value="2.80 A"/>
    <property type="chains" value="YY=4-127"/>
</dbReference>
<dbReference type="PDB" id="8BHF">
    <property type="method" value="EM"/>
    <property type="resolution" value="3.10 A"/>
    <property type="chains" value="Z3=4-127"/>
</dbReference>
<dbReference type="PDB" id="8BTK">
    <property type="method" value="EM"/>
    <property type="resolution" value="3.50 A"/>
    <property type="chains" value="Ax=1-130"/>
</dbReference>
<dbReference type="PDB" id="8P03">
    <property type="method" value="EM"/>
    <property type="resolution" value="3.04 A"/>
    <property type="chains" value="a=1-133"/>
</dbReference>
<dbReference type="PDB" id="8P09">
    <property type="method" value="EM"/>
    <property type="resolution" value="3.30 A"/>
    <property type="chains" value="a=1-133"/>
</dbReference>
<dbReference type="PDB" id="8P2K">
    <property type="method" value="EM"/>
    <property type="resolution" value="2.90 A"/>
    <property type="chains" value="Ax=1-130"/>
</dbReference>
<dbReference type="PDB" id="9C8K">
    <property type="method" value="EM"/>
    <property type="resolution" value="3.10 A"/>
    <property type="chains" value="Y=1-133"/>
</dbReference>
<dbReference type="PDBsum" id="3JAG"/>
<dbReference type="PDBsum" id="3JAH"/>
<dbReference type="PDBsum" id="3JAI"/>
<dbReference type="PDBsum" id="4D5L"/>
<dbReference type="PDBsum" id="4D61"/>
<dbReference type="PDBsum" id="4KZX"/>
<dbReference type="PDBsum" id="4KZY"/>
<dbReference type="PDBsum" id="4KZZ"/>
<dbReference type="PDBsum" id="5K0Y"/>
<dbReference type="PDBsum" id="5LZZ"/>
<dbReference type="PDBsum" id="6D90"/>
<dbReference type="PDBsum" id="6D9J"/>
<dbReference type="PDBsum" id="6P4G"/>
<dbReference type="PDBsum" id="6P4H"/>
<dbReference type="PDBsum" id="6P5I"/>
<dbReference type="PDBsum" id="6P5J"/>
<dbReference type="PDBsum" id="6P5K"/>
<dbReference type="PDBsum" id="6P5N"/>
<dbReference type="PDBsum" id="6W2S"/>
<dbReference type="PDBsum" id="6W2T"/>
<dbReference type="PDBsum" id="6YAL"/>
<dbReference type="PDBsum" id="6YAM"/>
<dbReference type="PDBsum" id="6YAN"/>
<dbReference type="PDBsum" id="7JQB"/>
<dbReference type="PDBsum" id="7JQC"/>
<dbReference type="PDBsum" id="7MDZ"/>
<dbReference type="PDBsum" id="7O7Y"/>
<dbReference type="PDBsum" id="7O7Z"/>
<dbReference type="PDBsum" id="7O80"/>
<dbReference type="PDBsum" id="7O81"/>
<dbReference type="PDBsum" id="7OYD"/>
<dbReference type="PDBsum" id="7SYG"/>
<dbReference type="PDBsum" id="7SYH"/>
<dbReference type="PDBsum" id="7SYI"/>
<dbReference type="PDBsum" id="7SYJ"/>
<dbReference type="PDBsum" id="7SYK"/>
<dbReference type="PDBsum" id="7SYL"/>
<dbReference type="PDBsum" id="7SYM"/>
<dbReference type="PDBsum" id="7SYN"/>
<dbReference type="PDBsum" id="7SYO"/>
<dbReference type="PDBsum" id="7SYP"/>
<dbReference type="PDBsum" id="7SYQ"/>
<dbReference type="PDBsum" id="7SYR"/>
<dbReference type="PDBsum" id="7SYS"/>
<dbReference type="PDBsum" id="7SYT"/>
<dbReference type="PDBsum" id="7SYU"/>
<dbReference type="PDBsum" id="7SYV"/>
<dbReference type="PDBsum" id="7SYW"/>
<dbReference type="PDBsum" id="7SYX"/>
<dbReference type="PDBsum" id="7TOQ"/>
<dbReference type="PDBsum" id="7TOR"/>
<dbReference type="PDBsum" id="7UCJ"/>
<dbReference type="PDBsum" id="7UCK"/>
<dbReference type="PDBsum" id="8BHF"/>
<dbReference type="PDBsum" id="8BTK"/>
<dbReference type="PDBsum" id="8P03"/>
<dbReference type="PDBsum" id="8P09"/>
<dbReference type="PDBsum" id="8P2K"/>
<dbReference type="PDBsum" id="9C8K"/>
<dbReference type="EMDB" id="EMD-0099"/>
<dbReference type="EMDB" id="EMD-0100"/>
<dbReference type="EMDB" id="EMD-0192"/>
<dbReference type="EMDB" id="EMD-0194"/>
<dbReference type="EMDB" id="EMD-0195"/>
<dbReference type="EMDB" id="EMD-0197"/>
<dbReference type="EMDB" id="EMD-10181"/>
<dbReference type="EMDB" id="EMD-13114"/>
<dbReference type="EMDB" id="EMD-4130"/>
<dbReference type="EMDB" id="EMD-4131"/>
<dbReference type="EMDB" id="EMD-4132"/>
<dbReference type="EMDB" id="EMD-4133"/>
<dbReference type="EMDB" id="EMD-4134"/>
<dbReference type="EMDB" id="EMD-4135"/>
<dbReference type="EMDB" id="EMD-4136"/>
<dbReference type="EMDB" id="EMD-45307"/>
<dbReference type="EMDB" id="EMD-4729"/>
<dbReference type="EMDB" id="EMD-4737"/>
<dbReference type="EMDB" id="EMD-4745"/>
<dbReference type="EMDB" id="EMD-8190"/>
<dbReference type="SMR" id="A0A5F9D2E6"/>
<dbReference type="Ensembl" id="ENSOCUT00000047728.1">
    <property type="protein sequence ID" value="ENSOCUP00000039888.1"/>
    <property type="gene ID" value="ENSOCUG00000012472.3"/>
</dbReference>
<dbReference type="GeneID" id="100354973"/>
<dbReference type="KEGG" id="ocu:100354973"/>
<dbReference type="CTD" id="6229"/>
<dbReference type="GeneTree" id="ENSGT00390000000153"/>
<dbReference type="OrthoDB" id="5571754at2759"/>
<dbReference type="Proteomes" id="UP000001811">
    <property type="component" value="Chromosome 18"/>
</dbReference>
<dbReference type="Bgee" id="ENSOCUG00000012472">
    <property type="expression patterns" value="Expressed in skin of back and 15 other cell types or tissues"/>
</dbReference>
<dbReference type="GO" id="GO:0022626">
    <property type="term" value="C:cytosolic ribosome"/>
    <property type="evidence" value="ECO:0007669"/>
    <property type="project" value="UniProtKB-ARBA"/>
</dbReference>
<dbReference type="GO" id="GO:0005730">
    <property type="term" value="C:nucleolus"/>
    <property type="evidence" value="ECO:0007669"/>
    <property type="project" value="UniProtKB-SubCell"/>
</dbReference>
<dbReference type="GO" id="GO:0044391">
    <property type="term" value="C:ribosomal subunit"/>
    <property type="evidence" value="ECO:0007669"/>
    <property type="project" value="UniProtKB-ARBA"/>
</dbReference>
<dbReference type="GO" id="GO:0003735">
    <property type="term" value="F:structural constituent of ribosome"/>
    <property type="evidence" value="ECO:0007669"/>
    <property type="project" value="InterPro"/>
</dbReference>
<dbReference type="GO" id="GO:0006412">
    <property type="term" value="P:translation"/>
    <property type="evidence" value="ECO:0007669"/>
    <property type="project" value="InterPro"/>
</dbReference>
<dbReference type="FunFam" id="3.30.70.3370:FF:000001">
    <property type="entry name" value="40S ribosomal protein S24"/>
    <property type="match status" value="1"/>
</dbReference>
<dbReference type="Gene3D" id="3.30.70.3370">
    <property type="match status" value="1"/>
</dbReference>
<dbReference type="HAMAP" id="MF_00545">
    <property type="entry name" value="Ribosomal_eS24"/>
    <property type="match status" value="1"/>
</dbReference>
<dbReference type="InterPro" id="IPR053709">
    <property type="entry name" value="eRP_eS24_sf"/>
</dbReference>
<dbReference type="InterPro" id="IPR001976">
    <property type="entry name" value="Ribosomal_eS24"/>
</dbReference>
<dbReference type="InterPro" id="IPR018098">
    <property type="entry name" value="Ribosomal_eS24_CS"/>
</dbReference>
<dbReference type="InterPro" id="IPR012678">
    <property type="entry name" value="Ribosomal_uL23/eL15/eS24_sf"/>
</dbReference>
<dbReference type="PANTHER" id="PTHR10496">
    <property type="entry name" value="40S RIBOSOMAL PROTEIN S24"/>
    <property type="match status" value="1"/>
</dbReference>
<dbReference type="Pfam" id="PF01282">
    <property type="entry name" value="Ribosomal_S24e"/>
    <property type="match status" value="1"/>
</dbReference>
<dbReference type="SUPFAM" id="SSF54189">
    <property type="entry name" value="Ribosomal proteins S24e, L23 and L15e"/>
    <property type="match status" value="1"/>
</dbReference>
<dbReference type="PROSITE" id="PS00529">
    <property type="entry name" value="RIBOSOMAL_S24E"/>
    <property type="match status" value="1"/>
</dbReference>
<protein>
    <recommendedName>
        <fullName>Small ribosomal subunit protein eS24</fullName>
    </recommendedName>
    <alternativeName>
        <fullName>40S ribosomal protein S24</fullName>
    </alternativeName>
</protein>
<gene>
    <name type="primary">RPS24</name>
</gene>
<feature type="chain" id="PRO_0000460074" description="Small ribosomal subunit protein eS24">
    <location>
        <begin position="1"/>
        <end position="133"/>
    </location>
</feature>
<feature type="region of interest" description="Disordered" evidence="2">
    <location>
        <begin position="92"/>
        <end position="133"/>
    </location>
</feature>
<feature type="compositionally biased region" description="Basic residues" evidence="2">
    <location>
        <begin position="101"/>
        <end position="119"/>
    </location>
</feature>
<feature type="modified residue" description="N-acetylmethionine" evidence="1">
    <location>
        <position position="1"/>
    </location>
</feature>
<feature type="modified residue" description="Phosphothreonine" evidence="1">
    <location>
        <position position="9"/>
    </location>
</feature>
<feature type="cross-link" description="Glycyl lysine isopeptide (Lys-Gly) (interchain with G-Cter in SUMO2)" evidence="1">
    <location>
        <position position="37"/>
    </location>
</feature>
<feature type="strand" evidence="31">
    <location>
        <begin position="6"/>
        <end position="15"/>
    </location>
</feature>
<feature type="turn" evidence="31">
    <location>
        <begin position="16"/>
        <end position="19"/>
    </location>
</feature>
<feature type="strand" evidence="31">
    <location>
        <begin position="20"/>
        <end position="28"/>
    </location>
</feature>
<feature type="strand" evidence="31">
    <location>
        <begin position="30"/>
        <end position="33"/>
    </location>
</feature>
<feature type="helix" evidence="31">
    <location>
        <begin position="37"/>
        <end position="48"/>
    </location>
</feature>
<feature type="strand" evidence="31">
    <location>
        <begin position="54"/>
        <end position="62"/>
    </location>
</feature>
<feature type="strand" evidence="31">
    <location>
        <begin position="69"/>
        <end position="79"/>
    </location>
</feature>
<feature type="helix" evidence="31">
    <location>
        <begin position="80"/>
        <end position="84"/>
    </location>
</feature>
<feature type="helix" evidence="31">
    <location>
        <begin position="88"/>
        <end position="91"/>
    </location>
</feature>
<feature type="helix" evidence="31">
    <location>
        <begin position="92"/>
        <end position="94"/>
    </location>
</feature>
<feature type="helix" evidence="31">
    <location>
        <begin position="104"/>
        <end position="114"/>
    </location>
</feature>
<feature type="helix" evidence="31">
    <location>
        <begin position="122"/>
        <end position="125"/>
    </location>
</feature>
<keyword id="KW-0002">3D-structure</keyword>
<keyword id="KW-0007">Acetylation</keyword>
<keyword id="KW-0963">Cytoplasm</keyword>
<keyword id="KW-1017">Isopeptide bond</keyword>
<keyword id="KW-0539">Nucleus</keyword>
<keyword id="KW-0597">Phosphoprotein</keyword>
<keyword id="KW-1185">Reference proteome</keyword>
<keyword id="KW-0687">Ribonucleoprotein</keyword>
<keyword id="KW-0689">Ribosomal protein</keyword>
<keyword id="KW-0832">Ubl conjugation</keyword>
<evidence type="ECO:0000250" key="1">
    <source>
        <dbReference type="UniProtKB" id="P62847"/>
    </source>
</evidence>
<evidence type="ECO:0000256" key="2">
    <source>
        <dbReference type="SAM" id="MobiDB-lite"/>
    </source>
</evidence>
<evidence type="ECO:0000269" key="3">
    <source>
    </source>
</evidence>
<evidence type="ECO:0000269" key="4">
    <source>
    </source>
</evidence>
<evidence type="ECO:0000269" key="5">
    <source>
    </source>
</evidence>
<evidence type="ECO:0000269" key="6">
    <source>
    </source>
</evidence>
<evidence type="ECO:0000269" key="7">
    <source>
    </source>
</evidence>
<evidence type="ECO:0000269" key="8">
    <source>
    </source>
</evidence>
<evidence type="ECO:0000269" key="9">
    <source>
    </source>
</evidence>
<evidence type="ECO:0000269" key="10">
    <source>
    </source>
</evidence>
<evidence type="ECO:0000269" key="11">
    <source>
    </source>
</evidence>
<evidence type="ECO:0000269" key="12">
    <source>
    </source>
</evidence>
<evidence type="ECO:0000305" key="13"/>
<evidence type="ECO:0007744" key="14">
    <source>
        <dbReference type="PDB" id="3JAG"/>
    </source>
</evidence>
<evidence type="ECO:0007744" key="15">
    <source>
        <dbReference type="PDB" id="3JAH"/>
    </source>
</evidence>
<evidence type="ECO:0007744" key="16">
    <source>
        <dbReference type="PDB" id="4D5L"/>
    </source>
</evidence>
<evidence type="ECO:0007744" key="17">
    <source>
        <dbReference type="PDB" id="4D61"/>
    </source>
</evidence>
<evidence type="ECO:0007744" key="18">
    <source>
        <dbReference type="PDB" id="4KZX"/>
    </source>
</evidence>
<evidence type="ECO:0007744" key="19">
    <source>
        <dbReference type="PDB" id="4KZY"/>
    </source>
</evidence>
<evidence type="ECO:0007744" key="20">
    <source>
        <dbReference type="PDB" id="6D90"/>
    </source>
</evidence>
<evidence type="ECO:0007744" key="21">
    <source>
        <dbReference type="PDB" id="6D9J"/>
    </source>
</evidence>
<evidence type="ECO:0007744" key="22">
    <source>
        <dbReference type="PDB" id="6P5I"/>
    </source>
</evidence>
<evidence type="ECO:0007744" key="23">
    <source>
        <dbReference type="PDB" id="6P5J"/>
    </source>
</evidence>
<evidence type="ECO:0007744" key="24">
    <source>
        <dbReference type="PDB" id="6W2S"/>
    </source>
</evidence>
<evidence type="ECO:0007744" key="25">
    <source>
        <dbReference type="PDB" id="6W2T"/>
    </source>
</evidence>
<evidence type="ECO:0007744" key="26">
    <source>
        <dbReference type="PDB" id="7OYD"/>
    </source>
</evidence>
<evidence type="ECO:0007744" key="27">
    <source>
        <dbReference type="PDB" id="7SYO"/>
    </source>
</evidence>
<evidence type="ECO:0007744" key="28">
    <source>
        <dbReference type="PDB" id="7SYP"/>
    </source>
</evidence>
<evidence type="ECO:0007744" key="29">
    <source>
        <dbReference type="PDB" id="7UCJ"/>
    </source>
</evidence>
<evidence type="ECO:0007744" key="30">
    <source>
        <dbReference type="PDB" id="7UCK"/>
    </source>
</evidence>
<evidence type="ECO:0007829" key="31">
    <source>
        <dbReference type="PDB" id="8P03"/>
    </source>
</evidence>
<name>RS24_RABIT</name>
<reference key="1">
    <citation type="journal article" date="2011" name="Nature">
        <title>A high-resolution map of human evolutionary constraint using 29 mammals.</title>
        <authorList>
            <person name="Lindblad-Toh K."/>
            <person name="Garber M."/>
            <person name="Zuk O."/>
            <person name="Lin M.F."/>
            <person name="Parker B.J."/>
            <person name="Washietl S."/>
            <person name="Kheradpour P."/>
            <person name="Ernst J."/>
            <person name="Jordan G."/>
            <person name="Mauceli E."/>
            <person name="Ward L.D."/>
            <person name="Lowe C.B."/>
            <person name="Holloway A.K."/>
            <person name="Clamp M."/>
            <person name="Gnerre S."/>
            <person name="Alfoldi J."/>
            <person name="Beal K."/>
            <person name="Chang J."/>
            <person name="Clawson H."/>
            <person name="Cuff J."/>
            <person name="Di Palma F."/>
            <person name="Fitzgerald S."/>
            <person name="Flicek P."/>
            <person name="Guttman M."/>
            <person name="Hubisz M.J."/>
            <person name="Jaffe D.B."/>
            <person name="Jungreis I."/>
            <person name="Kent W.J."/>
            <person name="Kostka D."/>
            <person name="Lara M."/>
            <person name="Martins A.L."/>
            <person name="Massingham T."/>
            <person name="Moltke I."/>
            <person name="Raney B.J."/>
            <person name="Rasmussen M.D."/>
            <person name="Robinson J."/>
            <person name="Stark A."/>
            <person name="Vilella A.J."/>
            <person name="Wen J."/>
            <person name="Xie X."/>
            <person name="Zody M.C."/>
            <person name="Baldwin J."/>
            <person name="Bloom T."/>
            <person name="Chin C.W."/>
            <person name="Heiman D."/>
            <person name="Nicol R."/>
            <person name="Nusbaum C."/>
            <person name="Young S."/>
            <person name="Wilkinson J."/>
            <person name="Worley K.C."/>
            <person name="Kovar C.L."/>
            <person name="Muzny D.M."/>
            <person name="Gibbs R.A."/>
            <person name="Cree A."/>
            <person name="Dihn H.H."/>
            <person name="Fowler G."/>
            <person name="Jhangiani S."/>
            <person name="Joshi V."/>
            <person name="Lee S."/>
            <person name="Lewis L.R."/>
            <person name="Nazareth L.V."/>
            <person name="Okwuonu G."/>
            <person name="Santibanez J."/>
            <person name="Warren W.C."/>
            <person name="Mardis E.R."/>
            <person name="Weinstock G.M."/>
            <person name="Wilson R.K."/>
            <person name="Delehaunty K."/>
            <person name="Dooling D."/>
            <person name="Fronik C."/>
            <person name="Fulton L."/>
            <person name="Fulton B."/>
            <person name="Graves T."/>
            <person name="Minx P."/>
            <person name="Sodergren E."/>
            <person name="Birney E."/>
            <person name="Margulies E.H."/>
            <person name="Herrero J."/>
            <person name="Green E.D."/>
            <person name="Haussler D."/>
            <person name="Siepel A."/>
            <person name="Goldman N."/>
            <person name="Pollard K.S."/>
            <person name="Pedersen J.S."/>
            <person name="Lander E.S."/>
            <person name="Kellis M."/>
        </authorList>
    </citation>
    <scope>NUCLEOTIDE SEQUENCE [LARGE SCALE GENOMIC DNA]</scope>
    <source>
        <strain>Thorbecke</strain>
    </source>
</reference>
<reference evidence="18 19" key="2">
    <citation type="journal article" date="2013" name="Nature">
        <title>The initiation of mammalian protein synthesis and mRNA scanning mechanism.</title>
        <authorList>
            <person name="Lomakin I.B."/>
            <person name="Steitz T.A."/>
        </authorList>
    </citation>
    <scope>X-RAY CRYSTALLOGRAPHY (7.01 ANGSTROMS) OF 40S RIBOSOME</scope>
    <scope>FUNCTION</scope>
    <scope>SUBUNIT</scope>
    <scope>SUBCELLULAR LOCATION</scope>
</reference>
<reference evidence="14 15" key="3">
    <citation type="journal article" date="2015" name="Nature">
        <title>Structural basis for stop codon recognition in eukaryotes.</title>
        <authorList>
            <person name="Brown A."/>
            <person name="Shao S."/>
            <person name="Murray J."/>
            <person name="Hegde R.S."/>
            <person name="Ramakrishnan V."/>
        </authorList>
    </citation>
    <scope>STRUCTURE BY ELECTRON MICROSCOPY (3.45 ANGSTROMS) OF 3-128 OF RIBOSOME</scope>
    <scope>FUNCTION</scope>
    <scope>SUBCELLULAR LOCATION</scope>
    <scope>SUBUNIT</scope>
</reference>
<reference evidence="16 17" key="4">
    <citation type="journal article" date="2015" name="Mol. Cell">
        <title>Cryo-EM of ribosomal 80S complexes with termination factors reveals the translocated cricket paralysis virus IRES.</title>
        <authorList>
            <person name="Muhs M."/>
            <person name="Hilal T."/>
            <person name="Mielke T."/>
            <person name="Skabkin M.A."/>
            <person name="Sanbonmatsu K.Y."/>
            <person name="Pestova T.V."/>
            <person name="Spahn C.M."/>
        </authorList>
    </citation>
    <scope>STRUCTURE BY ELECTRON MICROSCOPY (9.00 ANGSTROMS) OF RIBOSOME</scope>
    <scope>FUNCTION</scope>
    <scope>SUBUNIT</scope>
    <scope>SUBCELLULAR LOCATION</scope>
</reference>
<reference key="5">
    <citation type="journal article" date="2016" name="Cell">
        <title>Decoding mammalian ribosome-mRNA states by translational GTPase complexes.</title>
        <authorList>
            <person name="Shao S."/>
            <person name="Murray J."/>
            <person name="Brown A."/>
            <person name="Taunton J."/>
            <person name="Ramakrishnan V."/>
            <person name="Hegde R.S."/>
        </authorList>
    </citation>
    <scope>STRUCTURE BY ELECTRON MICROSCOPY (3.31 ANGSTROMS) OF 1-130 OF RIBOSOME</scope>
    <scope>FUNCTION</scope>
    <scope>SUBCELLULAR LOCATION</scope>
    <scope>SUBUNIT</scope>
</reference>
<reference evidence="20 21" key="6">
    <citation type="journal article" date="2018" name="Elife">
        <title>Dual tRNA mimicry in the Cricket paralysis virus IRES uncovers an unexpected similarity with the Hepatitis C Virus IRES.</title>
        <authorList>
            <person name="Pisareva V.P."/>
            <person name="Pisarev A.V."/>
            <person name="Fernandez I.S."/>
        </authorList>
    </citation>
    <scope>STRUCTURE BY ELECTRON MICROSCOPY (3.20 ANGSTROMS) OF RIBOSOME</scope>
    <scope>SUBCELLULAR LOCATION</scope>
    <scope>SUBUNIT</scope>
</reference>
<reference evidence="22 23" key="7">
    <citation type="journal article" date="2019" name="EMBO J.">
        <title>The Israeli acute paralysis virus IRES captures host ribosomes by mimicking a ribosomal state with hybrid tRNAs.</title>
        <authorList>
            <person name="Acosta-Reyes F."/>
            <person name="Neupane R."/>
            <person name="Frank J."/>
            <person name="Fernandez I.S."/>
        </authorList>
    </citation>
    <scope>STRUCTURE BY ELECTRON MICROSCOPY (3.10 ANGSTROMS) OF RIBOSOME</scope>
    <scope>SUBCELLULAR LOCATION</scope>
    <scope>SUBUNIT</scope>
</reference>
<reference evidence="24 25" key="8">
    <citation type="journal article" date="2020" name="Elife">
        <title>A complex IRES at the 5'-UTR of a viral mRNA assembles a functional 48S complex via an uAUG intermediate.</title>
        <authorList>
            <person name="Neupane R."/>
            <person name="Pisareva V.P."/>
            <person name="Rodriguez C.F."/>
            <person name="Pisarev A.V."/>
            <person name="Fernandez I.S."/>
        </authorList>
    </citation>
    <scope>STRUCTURE BY ELECTRON MICROSCOPY (3.00 ANGSTROMS) OF RIBOSOME</scope>
    <scope>SUBCELLULAR LOCATION</scope>
    <scope>SUBUNIT</scope>
</reference>
<reference evidence="27 28" key="9">
    <citation type="journal article" date="2022" name="EMBO J.">
        <title>Molecular architecture of 40S translation initiation complexes on the hepatitis C virus IRES.</title>
        <authorList>
            <person name="Brown Z.P."/>
            <person name="Abaeva I.S."/>
            <person name="De S."/>
            <person name="Hellen C.U.T."/>
            <person name="Pestova T.V."/>
            <person name="Frank J."/>
        </authorList>
    </citation>
    <scope>STRUCTURE BY ELECTRON MICROSCOPY (3.50 ANGSTROMS) OF RIBOSOME</scope>
    <scope>SUBCELLULAR LOCATION</scope>
    <scope>SUBUNIT</scope>
</reference>
<reference evidence="29 30" key="10">
    <citation type="journal article" date="2022" name="Mol. Cell">
        <title>Direct epitranscriptomic regulation of mammalian translation initiation through N4-acetylcytidine.</title>
        <authorList>
            <person name="Arango D."/>
            <person name="Sturgill D."/>
            <person name="Yang R."/>
            <person name="Kanai T."/>
            <person name="Bauer P."/>
            <person name="Roy J."/>
            <person name="Wang Z."/>
            <person name="Hosogane M."/>
            <person name="Schiffers S."/>
            <person name="Oberdoerffer S."/>
        </authorList>
    </citation>
    <scope>STRUCTURE BY ELECTRON MICROSCOPY (2.80 ANGSTROMS) OF 4-127 OF RIBOSOME</scope>
    <scope>SUBCELLULAR LOCATION</scope>
    <scope>SUBUNIT</scope>
</reference>
<reference evidence="26" key="11">
    <citation type="journal article" date="2023" name="Nature">
        <title>A molecular network of conserved factors keeps ribosomes dormant in the egg.</title>
        <authorList>
            <person name="Leesch F."/>
            <person name="Lorenzo-Orts L."/>
            <person name="Pribitzer C."/>
            <person name="Grishkovskaya I."/>
            <person name="Roehsner J."/>
            <person name="Chugunova A."/>
            <person name="Matzinger M."/>
            <person name="Roitinger E."/>
            <person name="Belacic K."/>
            <person name="Kandolf S."/>
            <person name="Lin T.Y."/>
            <person name="Mechtler K."/>
            <person name="Meinhart A."/>
            <person name="Haselbach D."/>
            <person name="Pauli A."/>
        </authorList>
    </citation>
    <scope>STRUCTURE BY ELECTRON MICROSCOPY (2.30 ANGSTROMS) OF RIBOSOME</scope>
    <scope>SUBCELLULAR LOCATION</scope>
    <scope>SUBUNIT</scope>
</reference>